<gene>
    <name evidence="1" type="primary">hemL</name>
    <name type="ordered locus">Oter_3547</name>
</gene>
<comment type="catalytic activity">
    <reaction evidence="1">
        <text>(S)-4-amino-5-oxopentanoate = 5-aminolevulinate</text>
        <dbReference type="Rhea" id="RHEA:14265"/>
        <dbReference type="ChEBI" id="CHEBI:57501"/>
        <dbReference type="ChEBI" id="CHEBI:356416"/>
        <dbReference type="EC" id="5.4.3.8"/>
    </reaction>
</comment>
<comment type="cofactor">
    <cofactor evidence="1">
        <name>pyridoxal 5'-phosphate</name>
        <dbReference type="ChEBI" id="CHEBI:597326"/>
    </cofactor>
</comment>
<comment type="pathway">
    <text evidence="1">Porphyrin-containing compound metabolism; protoporphyrin-IX biosynthesis; 5-aminolevulinate from L-glutamyl-tRNA(Glu): step 2/2.</text>
</comment>
<comment type="subunit">
    <text evidence="1">Homodimer.</text>
</comment>
<comment type="subcellular location">
    <subcellularLocation>
        <location evidence="1">Cytoplasm</location>
    </subcellularLocation>
</comment>
<comment type="similarity">
    <text evidence="1">Belongs to the class-III pyridoxal-phosphate-dependent aminotransferase family. HemL subfamily.</text>
</comment>
<proteinExistence type="inferred from homology"/>
<evidence type="ECO:0000255" key="1">
    <source>
        <dbReference type="HAMAP-Rule" id="MF_00375"/>
    </source>
</evidence>
<reference key="1">
    <citation type="journal article" date="2011" name="J. Bacteriol.">
        <title>Genome sequence of the verrucomicrobium Opitutus terrae PB90-1, an abundant inhabitant of rice paddy soil ecosystems.</title>
        <authorList>
            <person name="van Passel M.W."/>
            <person name="Kant R."/>
            <person name="Palva A."/>
            <person name="Copeland A."/>
            <person name="Lucas S."/>
            <person name="Lapidus A."/>
            <person name="Glavina del Rio T."/>
            <person name="Pitluck S."/>
            <person name="Goltsman E."/>
            <person name="Clum A."/>
            <person name="Sun H."/>
            <person name="Schmutz J."/>
            <person name="Larimer F.W."/>
            <person name="Land M.L."/>
            <person name="Hauser L."/>
            <person name="Kyrpides N."/>
            <person name="Mikhailova N."/>
            <person name="Richardson P.P."/>
            <person name="Janssen P.H."/>
            <person name="de Vos W.M."/>
            <person name="Smidt H."/>
        </authorList>
    </citation>
    <scope>NUCLEOTIDE SEQUENCE [LARGE SCALE GENOMIC DNA]</scope>
    <source>
        <strain>DSM 11246 / JCM 15787 / PB90-1</strain>
    </source>
</reference>
<keyword id="KW-0963">Cytoplasm</keyword>
<keyword id="KW-0413">Isomerase</keyword>
<keyword id="KW-0627">Porphyrin biosynthesis</keyword>
<keyword id="KW-0663">Pyridoxal phosphate</keyword>
<keyword id="KW-1185">Reference proteome</keyword>
<protein>
    <recommendedName>
        <fullName evidence="1">Glutamate-1-semialdehyde 2,1-aminomutase</fullName>
        <shortName evidence="1">GSA</shortName>
        <ecNumber evidence="1">5.4.3.8</ecNumber>
    </recommendedName>
    <alternativeName>
        <fullName evidence="1">Glutamate-1-semialdehyde aminotransferase</fullName>
        <shortName evidence="1">GSA-AT</shortName>
    </alternativeName>
</protein>
<dbReference type="EC" id="5.4.3.8" evidence="1"/>
<dbReference type="EMBL" id="CP001032">
    <property type="protein sequence ID" value="ACB76824.1"/>
    <property type="molecule type" value="Genomic_DNA"/>
</dbReference>
<dbReference type="RefSeq" id="WP_012376353.1">
    <property type="nucleotide sequence ID" value="NC_010571.1"/>
</dbReference>
<dbReference type="SMR" id="B1ZVF7"/>
<dbReference type="STRING" id="452637.Oter_3547"/>
<dbReference type="KEGG" id="ote:Oter_3547"/>
<dbReference type="eggNOG" id="COG0001">
    <property type="taxonomic scope" value="Bacteria"/>
</dbReference>
<dbReference type="HOGENOM" id="CLU_016922_1_5_0"/>
<dbReference type="OrthoDB" id="9807885at2"/>
<dbReference type="UniPathway" id="UPA00251">
    <property type="reaction ID" value="UER00317"/>
</dbReference>
<dbReference type="Proteomes" id="UP000007013">
    <property type="component" value="Chromosome"/>
</dbReference>
<dbReference type="GO" id="GO:0005737">
    <property type="term" value="C:cytoplasm"/>
    <property type="evidence" value="ECO:0007669"/>
    <property type="project" value="UniProtKB-SubCell"/>
</dbReference>
<dbReference type="GO" id="GO:0042286">
    <property type="term" value="F:glutamate-1-semialdehyde 2,1-aminomutase activity"/>
    <property type="evidence" value="ECO:0007669"/>
    <property type="project" value="UniProtKB-UniRule"/>
</dbReference>
<dbReference type="GO" id="GO:0030170">
    <property type="term" value="F:pyridoxal phosphate binding"/>
    <property type="evidence" value="ECO:0007669"/>
    <property type="project" value="InterPro"/>
</dbReference>
<dbReference type="GO" id="GO:0008483">
    <property type="term" value="F:transaminase activity"/>
    <property type="evidence" value="ECO:0007669"/>
    <property type="project" value="InterPro"/>
</dbReference>
<dbReference type="GO" id="GO:0006782">
    <property type="term" value="P:protoporphyrinogen IX biosynthetic process"/>
    <property type="evidence" value="ECO:0007669"/>
    <property type="project" value="UniProtKB-UniRule"/>
</dbReference>
<dbReference type="CDD" id="cd00610">
    <property type="entry name" value="OAT_like"/>
    <property type="match status" value="1"/>
</dbReference>
<dbReference type="FunFam" id="3.40.640.10:FF:000021">
    <property type="entry name" value="Glutamate-1-semialdehyde 2,1-aminomutase"/>
    <property type="match status" value="1"/>
</dbReference>
<dbReference type="Gene3D" id="3.90.1150.10">
    <property type="entry name" value="Aspartate Aminotransferase, domain 1"/>
    <property type="match status" value="1"/>
</dbReference>
<dbReference type="Gene3D" id="3.40.640.10">
    <property type="entry name" value="Type I PLP-dependent aspartate aminotransferase-like (Major domain)"/>
    <property type="match status" value="1"/>
</dbReference>
<dbReference type="HAMAP" id="MF_00375">
    <property type="entry name" value="HemL_aminotrans_3"/>
    <property type="match status" value="1"/>
</dbReference>
<dbReference type="InterPro" id="IPR004639">
    <property type="entry name" value="4pyrrol_synth_GluAld_NH2Trfase"/>
</dbReference>
<dbReference type="InterPro" id="IPR005814">
    <property type="entry name" value="Aminotrans_3"/>
</dbReference>
<dbReference type="InterPro" id="IPR049704">
    <property type="entry name" value="Aminotrans_3_PPA_site"/>
</dbReference>
<dbReference type="InterPro" id="IPR015424">
    <property type="entry name" value="PyrdxlP-dep_Trfase"/>
</dbReference>
<dbReference type="InterPro" id="IPR015421">
    <property type="entry name" value="PyrdxlP-dep_Trfase_major"/>
</dbReference>
<dbReference type="InterPro" id="IPR015422">
    <property type="entry name" value="PyrdxlP-dep_Trfase_small"/>
</dbReference>
<dbReference type="NCBIfam" id="TIGR00713">
    <property type="entry name" value="hemL"/>
    <property type="match status" value="1"/>
</dbReference>
<dbReference type="NCBIfam" id="NF000818">
    <property type="entry name" value="PRK00062.1"/>
    <property type="match status" value="1"/>
</dbReference>
<dbReference type="PANTHER" id="PTHR43713">
    <property type="entry name" value="GLUTAMATE-1-SEMIALDEHYDE 2,1-AMINOMUTASE"/>
    <property type="match status" value="1"/>
</dbReference>
<dbReference type="PANTHER" id="PTHR43713:SF3">
    <property type="entry name" value="GLUTAMATE-1-SEMIALDEHYDE 2,1-AMINOMUTASE 1, CHLOROPLASTIC-RELATED"/>
    <property type="match status" value="1"/>
</dbReference>
<dbReference type="Pfam" id="PF00202">
    <property type="entry name" value="Aminotran_3"/>
    <property type="match status" value="1"/>
</dbReference>
<dbReference type="SUPFAM" id="SSF53383">
    <property type="entry name" value="PLP-dependent transferases"/>
    <property type="match status" value="1"/>
</dbReference>
<dbReference type="PROSITE" id="PS00600">
    <property type="entry name" value="AA_TRANSFER_CLASS_3"/>
    <property type="match status" value="1"/>
</dbReference>
<organism>
    <name type="scientific">Opitutus terrae (strain DSM 11246 / JCM 15787 / PB90-1)</name>
    <dbReference type="NCBI Taxonomy" id="452637"/>
    <lineage>
        <taxon>Bacteria</taxon>
        <taxon>Pseudomonadati</taxon>
        <taxon>Verrucomicrobiota</taxon>
        <taxon>Opitutia</taxon>
        <taxon>Opitutales</taxon>
        <taxon>Opitutaceae</taxon>
        <taxon>Opitutus</taxon>
    </lineage>
</organism>
<sequence length="425" mass="45096">MSVSDSLFERAKQLMPGGVNSPVRAFRSVGGAPFFVKAARGATLVTADDQELIDFVCTWGPAIHGHNHPRIKAAIAEALEHGTSFGTPNPYEVEMAELIVRFFPSIQKVRMCNSGTEATMSAIRLARGFTKRSKIIKFAGCYHGHSDSLLIKAGSGALTHGHPDSAGVPISFAQETVVVTYNDRAALEAAFAANVGQIACVIIEPYCGNVGFIMPDAGYLQAVRELCTREGAVLIFDEVMTGFRQARGGVQELENITPDLTCLGKIIGGGLPVGAFGGRTYLMDLLAPLGPVYQAGTLSGNPLAMAAGIAALKLLDEENPYARLDQLGRQLRDAVLAAAKTKGLPVQVPQRGSMFSIFFTPQPVRDYASALAGDAKLFGRFFHTCLANGVYLAPSAYEAAFLSTAHEGAAIDRACEVLASAINEL</sequence>
<accession>B1ZVF7</accession>
<name>GSA_OPITP</name>
<feature type="chain" id="PRO_0000382354" description="Glutamate-1-semialdehyde 2,1-aminomutase">
    <location>
        <begin position="1"/>
        <end position="425"/>
    </location>
</feature>
<feature type="modified residue" description="N6-(pyridoxal phosphate)lysine" evidence="1">
    <location>
        <position position="265"/>
    </location>
</feature>